<evidence type="ECO:0000255" key="1">
    <source>
        <dbReference type="HAMAP-Rule" id="MF_00003"/>
    </source>
</evidence>
<feature type="chain" id="PRO_1000088930" description="Ribosome-binding factor A">
    <location>
        <begin position="1"/>
        <end position="133"/>
    </location>
</feature>
<comment type="function">
    <text evidence="1">One of several proteins that assist in the late maturation steps of the functional core of the 30S ribosomal subunit. Associates with free 30S ribosomal subunits (but not with 30S subunits that are part of 70S ribosomes or polysomes). Required for efficient processing of 16S rRNA. May interact with the 5'-terminal helix region of 16S rRNA.</text>
</comment>
<comment type="subunit">
    <text evidence="1">Monomer. Binds 30S ribosomal subunits, but not 50S ribosomal subunits or 70S ribosomes.</text>
</comment>
<comment type="subcellular location">
    <subcellularLocation>
        <location evidence="1">Cytoplasm</location>
    </subcellularLocation>
</comment>
<comment type="similarity">
    <text evidence="1">Belongs to the RbfA family.</text>
</comment>
<organism>
    <name type="scientific">Salmonella schwarzengrund (strain CVM19633)</name>
    <dbReference type="NCBI Taxonomy" id="439843"/>
    <lineage>
        <taxon>Bacteria</taxon>
        <taxon>Pseudomonadati</taxon>
        <taxon>Pseudomonadota</taxon>
        <taxon>Gammaproteobacteria</taxon>
        <taxon>Enterobacterales</taxon>
        <taxon>Enterobacteriaceae</taxon>
        <taxon>Salmonella</taxon>
    </lineage>
</organism>
<protein>
    <recommendedName>
        <fullName evidence="1">Ribosome-binding factor A</fullName>
    </recommendedName>
</protein>
<proteinExistence type="inferred from homology"/>
<sequence>MAKEFGRPQRVAQEMQKEIAIILQREIKDPRLGMMTTVSGVEMSRDLAYAKVFVTFLNDKDEDAVKAGIKALQEASGFIRSLLGKAMRLRIVPELTFFYDNSLVEGMRMSNLVTNVVKHDEERRVNPDDNKED</sequence>
<name>RBFA_SALSV</name>
<gene>
    <name evidence="1" type="primary">rbfA</name>
    <name type="ordered locus">SeSA_A3474</name>
</gene>
<dbReference type="EMBL" id="CP001127">
    <property type="protein sequence ID" value="ACF92367.1"/>
    <property type="molecule type" value="Genomic_DNA"/>
</dbReference>
<dbReference type="RefSeq" id="WP_001040198.1">
    <property type="nucleotide sequence ID" value="NC_011094.1"/>
</dbReference>
<dbReference type="SMR" id="B4TWD6"/>
<dbReference type="KEGG" id="sew:SeSA_A3474"/>
<dbReference type="HOGENOM" id="CLU_089475_5_0_6"/>
<dbReference type="Proteomes" id="UP000001865">
    <property type="component" value="Chromosome"/>
</dbReference>
<dbReference type="GO" id="GO:0005829">
    <property type="term" value="C:cytosol"/>
    <property type="evidence" value="ECO:0007669"/>
    <property type="project" value="TreeGrafter"/>
</dbReference>
<dbReference type="GO" id="GO:0043024">
    <property type="term" value="F:ribosomal small subunit binding"/>
    <property type="evidence" value="ECO:0007669"/>
    <property type="project" value="TreeGrafter"/>
</dbReference>
<dbReference type="GO" id="GO:0030490">
    <property type="term" value="P:maturation of SSU-rRNA"/>
    <property type="evidence" value="ECO:0007669"/>
    <property type="project" value="UniProtKB-UniRule"/>
</dbReference>
<dbReference type="FunFam" id="3.30.300.20:FF:000007">
    <property type="entry name" value="Ribosome-binding factor A"/>
    <property type="match status" value="1"/>
</dbReference>
<dbReference type="Gene3D" id="3.30.300.20">
    <property type="match status" value="1"/>
</dbReference>
<dbReference type="HAMAP" id="MF_00003">
    <property type="entry name" value="RbfA"/>
    <property type="match status" value="1"/>
</dbReference>
<dbReference type="InterPro" id="IPR015946">
    <property type="entry name" value="KH_dom-like_a/b"/>
</dbReference>
<dbReference type="InterPro" id="IPR000238">
    <property type="entry name" value="RbfA"/>
</dbReference>
<dbReference type="InterPro" id="IPR023799">
    <property type="entry name" value="RbfA_dom_sf"/>
</dbReference>
<dbReference type="InterPro" id="IPR020053">
    <property type="entry name" value="Ribosome-bd_factorA_CS"/>
</dbReference>
<dbReference type="NCBIfam" id="TIGR00082">
    <property type="entry name" value="rbfA"/>
    <property type="match status" value="1"/>
</dbReference>
<dbReference type="PANTHER" id="PTHR33515">
    <property type="entry name" value="RIBOSOME-BINDING FACTOR A, CHLOROPLASTIC-RELATED"/>
    <property type="match status" value="1"/>
</dbReference>
<dbReference type="PANTHER" id="PTHR33515:SF1">
    <property type="entry name" value="RIBOSOME-BINDING FACTOR A, CHLOROPLASTIC-RELATED"/>
    <property type="match status" value="1"/>
</dbReference>
<dbReference type="Pfam" id="PF02033">
    <property type="entry name" value="RBFA"/>
    <property type="match status" value="1"/>
</dbReference>
<dbReference type="SUPFAM" id="SSF89919">
    <property type="entry name" value="Ribosome-binding factor A, RbfA"/>
    <property type="match status" value="1"/>
</dbReference>
<dbReference type="PROSITE" id="PS01319">
    <property type="entry name" value="RBFA"/>
    <property type="match status" value="1"/>
</dbReference>
<accession>B4TWD6</accession>
<reference key="1">
    <citation type="journal article" date="2011" name="J. Bacteriol.">
        <title>Comparative genomics of 28 Salmonella enterica isolates: evidence for CRISPR-mediated adaptive sublineage evolution.</title>
        <authorList>
            <person name="Fricke W.F."/>
            <person name="Mammel M.K."/>
            <person name="McDermott P.F."/>
            <person name="Tartera C."/>
            <person name="White D.G."/>
            <person name="Leclerc J.E."/>
            <person name="Ravel J."/>
            <person name="Cebula T.A."/>
        </authorList>
    </citation>
    <scope>NUCLEOTIDE SEQUENCE [LARGE SCALE GENOMIC DNA]</scope>
    <source>
        <strain>CVM19633</strain>
    </source>
</reference>
<keyword id="KW-0963">Cytoplasm</keyword>
<keyword id="KW-0690">Ribosome biogenesis</keyword>